<keyword id="KW-1003">Cell membrane</keyword>
<keyword id="KW-1015">Disulfide bond</keyword>
<keyword id="KW-0245">EGF-like domain</keyword>
<keyword id="KW-0325">Glycoprotein</keyword>
<keyword id="KW-0336">GPI-anchor</keyword>
<keyword id="KW-0449">Lipoprotein</keyword>
<keyword id="KW-0461">Malaria</keyword>
<keyword id="KW-0472">Membrane</keyword>
<keyword id="KW-0477">Merozoite</keyword>
<keyword id="KW-0677">Repeat</keyword>
<keyword id="KW-0964">Secreted</keyword>
<keyword id="KW-0732">Signal</keyword>
<keyword id="KW-0926">Vacuole</keyword>
<evidence type="ECO:0000250" key="1">
    <source>
        <dbReference type="UniProtKB" id="P13819"/>
    </source>
</evidence>
<evidence type="ECO:0000250" key="2">
    <source>
        <dbReference type="UniProtKB" id="Q8I0U8"/>
    </source>
</evidence>
<evidence type="ECO:0000255" key="3"/>
<evidence type="ECO:0000256" key="4">
    <source>
        <dbReference type="SAM" id="MobiDB-lite"/>
    </source>
</evidence>
<evidence type="ECO:0000269" key="5">
    <source>
    </source>
</evidence>
<evidence type="ECO:0000303" key="6">
    <source>
    </source>
</evidence>
<proteinExistence type="inferred from homology"/>
<gene>
    <name evidence="2" type="primary">MSP1</name>
</gene>
<protein>
    <recommendedName>
        <fullName evidence="2">Merozoite surface protein 1</fullName>
    </recommendedName>
    <alternativeName>
        <fullName evidence="6">Gp195</fullName>
    </alternativeName>
    <alternativeName>
        <fullName evidence="6">Merozoite surface antigen</fullName>
    </alternativeName>
    <alternativeName>
        <fullName evidence="1">PMMSA</fullName>
    </alternativeName>
    <component>
        <recommendedName>
            <fullName evidence="2">p83 subunit</fullName>
        </recommendedName>
    </component>
    <component>
        <recommendedName>
            <fullName evidence="2">p30 subunit</fullName>
        </recommendedName>
    </component>
    <component>
        <recommendedName>
            <fullName evidence="2">p38 subunit</fullName>
        </recommendedName>
    </component>
    <component>
        <recommendedName>
            <fullName evidence="2">p42 subunit</fullName>
        </recommendedName>
    </component>
    <component>
        <recommendedName>
            <fullName evidence="2">p33 subunit</fullName>
        </recommendedName>
    </component>
    <component>
        <recommendedName>
            <fullName evidence="2">p19 subunit</fullName>
        </recommendedName>
    </component>
</protein>
<reference key="1">
    <citation type="journal article" date="1988" name="Exp. Parasitol.">
        <title>Plasmodium falciparum: gene structure and hydropathy profile of the major merozoite surface antigen (gp195) of the Uganda-Palo Alto isolate.</title>
        <authorList>
            <person name="Chang S.P."/>
            <person name="Kramer K.J."/>
            <person name="Yamaga K.M."/>
            <person name="Kato A."/>
            <person name="Case S.E."/>
            <person name="Siddiqui W.A."/>
        </authorList>
    </citation>
    <scope>NUCLEOTIDE SEQUENCE [GENOMIC DNA]</scope>
    <scope>POLYMORPHISM</scope>
</reference>
<dbReference type="EMBL" id="M37213">
    <property type="protein sequence ID" value="AAA29611.1"/>
    <property type="molecule type" value="Genomic_DNA"/>
</dbReference>
<dbReference type="BMRB" id="P50495"/>
<dbReference type="SMR" id="P50495"/>
<dbReference type="GlyCosmos" id="P50495">
    <property type="glycosylation" value="13 sites, No reported glycans"/>
</dbReference>
<dbReference type="GO" id="GO:0005576">
    <property type="term" value="C:extracellular region"/>
    <property type="evidence" value="ECO:0007669"/>
    <property type="project" value="UniProtKB-SubCell"/>
</dbReference>
<dbReference type="GO" id="GO:0005886">
    <property type="term" value="C:plasma membrane"/>
    <property type="evidence" value="ECO:0007669"/>
    <property type="project" value="UniProtKB-SubCell"/>
</dbReference>
<dbReference type="GO" id="GO:0098552">
    <property type="term" value="C:side of membrane"/>
    <property type="evidence" value="ECO:0007669"/>
    <property type="project" value="UniProtKB-KW"/>
</dbReference>
<dbReference type="GO" id="GO:0005774">
    <property type="term" value="C:vacuolar membrane"/>
    <property type="evidence" value="ECO:0007669"/>
    <property type="project" value="UniProtKB-SubCell"/>
</dbReference>
<dbReference type="Gene3D" id="2.10.25.10">
    <property type="entry name" value="Laminin"/>
    <property type="match status" value="2"/>
</dbReference>
<dbReference type="InterPro" id="IPR010901">
    <property type="entry name" value="MSP1_C"/>
</dbReference>
<dbReference type="InterPro" id="IPR024730">
    <property type="entry name" value="MSP1_EGF_1"/>
</dbReference>
<dbReference type="Pfam" id="PF12946">
    <property type="entry name" value="EGF_MSP1_1"/>
    <property type="match status" value="1"/>
</dbReference>
<dbReference type="Pfam" id="PF07462">
    <property type="entry name" value="MSP1_C"/>
    <property type="match status" value="1"/>
</dbReference>
<dbReference type="SUPFAM" id="SSF57196">
    <property type="entry name" value="EGF/Laminin"/>
    <property type="match status" value="2"/>
</dbReference>
<feature type="signal peptide" evidence="3">
    <location>
        <begin position="1"/>
        <end position="19"/>
    </location>
</feature>
<feature type="chain" id="PRO_0000024559" description="Merozoite surface protein 1">
    <location>
        <begin position="20"/>
        <end position="1705"/>
    </location>
</feature>
<feature type="chain" id="PRO_0000459278" description="p83 subunit" evidence="2">
    <location>
        <begin position="20"/>
        <end position="734"/>
    </location>
</feature>
<feature type="chain" id="PRO_0000459279" description="p30 subunit" evidence="2">
    <location>
        <begin position="735"/>
        <end position="916"/>
    </location>
</feature>
<feature type="chain" id="PRO_0000459280" description="p38 subunit" evidence="2">
    <location>
        <begin position="917"/>
        <end position="1332"/>
    </location>
</feature>
<feature type="chain" id="PRO_0000459281" description="p42 subunit" evidence="2">
    <location>
        <begin position="1333"/>
        <end position="1705"/>
    </location>
</feature>
<feature type="chain" id="PRO_0000459282" description="p33 subunit" evidence="2">
    <location>
        <begin position="1333"/>
        <end position="1612"/>
    </location>
</feature>
<feature type="chain" id="PRO_0000459283" description="p19 subunit" evidence="2">
    <location>
        <begin position="1613"/>
        <end position="1705"/>
    </location>
</feature>
<feature type="propeptide" id="PRO_0000024560" description="Removed in mature form" evidence="3">
    <location>
        <begin position="1706"/>
        <end position="1726"/>
    </location>
</feature>
<feature type="domain" description="EGF-like 1" evidence="2">
    <location>
        <begin position="1617"/>
        <end position="1657"/>
    </location>
</feature>
<feature type="domain" description="EGF-like 2" evidence="2">
    <location>
        <begin position="1658"/>
        <end position="1705"/>
    </location>
</feature>
<feature type="region of interest" description="Disordered" evidence="4">
    <location>
        <begin position="61"/>
        <end position="149"/>
    </location>
</feature>
<feature type="region of interest" description="Disordered" evidence="4">
    <location>
        <begin position="735"/>
        <end position="771"/>
    </location>
</feature>
<feature type="region of interest" description="Disordered" evidence="4">
    <location>
        <begin position="914"/>
        <end position="961"/>
    </location>
</feature>
<feature type="region of interest" description="Disordered" evidence="4">
    <location>
        <begin position="1254"/>
        <end position="1284"/>
    </location>
</feature>
<feature type="region of interest" description="Disordered" evidence="4">
    <location>
        <begin position="1476"/>
        <end position="1497"/>
    </location>
</feature>
<feature type="compositionally biased region" description="Low complexity" evidence="4">
    <location>
        <begin position="61"/>
        <end position="124"/>
    </location>
</feature>
<feature type="compositionally biased region" description="Polar residues" evidence="4">
    <location>
        <begin position="125"/>
        <end position="134"/>
    </location>
</feature>
<feature type="compositionally biased region" description="Low complexity" evidence="4">
    <location>
        <begin position="135"/>
        <end position="144"/>
    </location>
</feature>
<feature type="compositionally biased region" description="Acidic residues" evidence="4">
    <location>
        <begin position="755"/>
        <end position="765"/>
    </location>
</feature>
<feature type="compositionally biased region" description="Low complexity" evidence="4">
    <location>
        <begin position="914"/>
        <end position="952"/>
    </location>
</feature>
<feature type="compositionally biased region" description="Polar residues" evidence="4">
    <location>
        <begin position="1270"/>
        <end position="1284"/>
    </location>
</feature>
<feature type="compositionally biased region" description="Pro residues" evidence="4">
    <location>
        <begin position="1481"/>
        <end position="1490"/>
    </location>
</feature>
<feature type="lipid moiety-binding region" description="GPI-anchor amidated serine" evidence="3">
    <location>
        <position position="1705"/>
    </location>
</feature>
<feature type="glycosylation site" description="N-linked (GlcNAc...) asparagine" evidence="3">
    <location>
        <position position="133"/>
    </location>
</feature>
<feature type="glycosylation site" description="N-linked (GlcNAc...) asparagine" evidence="3">
    <location>
        <position position="272"/>
    </location>
</feature>
<feature type="glycosylation site" description="N-linked (GlcNAc...) asparagine" evidence="3">
    <location>
        <position position="501"/>
    </location>
</feature>
<feature type="glycosylation site" description="N-linked (GlcNAc...) asparagine" evidence="3">
    <location>
        <position position="567"/>
    </location>
</feature>
<feature type="glycosylation site" description="N-linked (GlcNAc...) asparagine" evidence="3">
    <location>
        <position position="638"/>
    </location>
</feature>
<feature type="glycosylation site" description="N-linked (GlcNAc...) asparagine" evidence="3">
    <location>
        <position position="827"/>
    </location>
</feature>
<feature type="glycosylation site" description="N-linked (GlcNAc...) asparagine" evidence="3">
    <location>
        <position position="924"/>
    </location>
</feature>
<feature type="glycosylation site" description="N-linked (GlcNAc...) asparagine" evidence="3">
    <location>
        <position position="944"/>
    </location>
</feature>
<feature type="glycosylation site" description="N-linked (GlcNAc...) asparagine" evidence="3">
    <location>
        <position position="990"/>
    </location>
</feature>
<feature type="glycosylation site" description="N-linked (GlcNAc...) asparagine" evidence="3">
    <location>
        <position position="1016"/>
    </location>
</feature>
<feature type="glycosylation site" description="N-linked (GlcNAc...) asparagine" evidence="3">
    <location>
        <position position="1114"/>
    </location>
</feature>
<feature type="glycosylation site" description="N-linked (GlcNAc...) asparagine" evidence="3">
    <location>
        <position position="1221"/>
    </location>
</feature>
<feature type="glycosylation site" description="N-linked (GlcNAc...) asparagine" evidence="3">
    <location>
        <position position="1613"/>
    </location>
</feature>
<feature type="disulfide bond" evidence="2">
    <location>
        <begin position="1619"/>
        <end position="1630"/>
    </location>
</feature>
<feature type="disulfide bond" evidence="2">
    <location>
        <begin position="1624"/>
        <end position="1640"/>
    </location>
</feature>
<feature type="disulfide bond" evidence="2">
    <location>
        <begin position="1642"/>
        <end position="1653"/>
    </location>
</feature>
<feature type="disulfide bond" evidence="2">
    <location>
        <begin position="1661"/>
        <end position="1674"/>
    </location>
</feature>
<feature type="disulfide bond" evidence="2">
    <location>
        <begin position="1668"/>
        <end position="1688"/>
    </location>
</feature>
<feature type="disulfide bond" evidence="2">
    <location>
        <begin position="1690"/>
        <end position="1704"/>
    </location>
</feature>
<sequence>MKIIFFLCSFLFFIINTQCVTHESYQELVKKLEALEDAVLTGYGLFHKEKMILNEEEITTKGASAQSGTSGTSGTSGTSGTSGTSGTSAQSGTSGTSAQSGTSGTSAQSGTSGTSGTSGTSPSSRSNTLPRSNTSSGASPPADASDSDAKSYADLKHRVRNYLFTIKELKYPELFDLTNHMLTLCDNIHGFKYLIDGYEEINELLYKLNFYFDLLRAKLNDVCANDYCQIPFNLKIRANELDVLKKLVFGYRKPLDNIKDNVGKMEDYIKKNKTTIANINELIEGSKKTIDQNKNADNEEGKKKLYQAQYDLSIYNKQLEEAHNLISVLEKRIDTLKKNENIKELLDKINEIKNPPPANSGNTPNTLLDKNKKIEEHEEKIKEIAKTIKFNIDSLFTDPLELEYYLREKNKKVDVTPKSQDPTKSVQIPKVPYPNGIVYPLPLTDIHNSLAADNDKNSYGDLMNPDTKEKINEKIITDNKERKIFINNIKKQIDLEEKKINHTKEQNKKLLEDYEKSKKDYEELLEKFYEMKFNNNFDKDVVDKIFSARYTYNVEKQRYNNKFSSSNNSVYNVQKLKKALSYLEDYSLRKGISEKDFNHYYTLKTGLEADIKKLTEEIKSSENKILEKNFKGLTHSANASLEVYDIVKLQVQKVLLIKKIEDLRKIELFLKNAQLKDSIHVPNIYKPQNKPEPYYLIVLKKEVDKLKEFIPKVKDMLKKEQAVLSSITQPLVAASETTEDGGHSTHTLSQSGETEVTEETEETEETVGHTTTVTITLPPKEVKVVENSIEHKSNDNSQALTKTVYLKKLDEFLTKSYICHKYILVSNSSMDQKLLEVYNLTPEEENELKSCDPLDLLFNIQNNIPAMYSLYDSMNNDLQHLFFELYQKEMIYYLHKLKEENHIKKLLEEQKQITGTSSTSSPGNTTVNTAQSATHSNSQNQQSNASSTNTQNGVAVSSGPAVVEESHDPLTVLSISNDLKGIVSLLNLGNKTKVPNPLTISTTEMEKFYENILKNNDTYFNDDIKQFVKSNSKVITGLTETQKNALNDEIKKLKDTLQLSFDLYNKYKLKLDRLFNKKKELGQDKMQIKKLTLLKEQLESKLNSLNNPHNVLQNFSVFFNKKKEAEIAETENTLENTKILLKHYKGLVKYYNGESSPLKTLSEVSIQTEDNYANLEKFRVLSKIDGKLNDNLHLGKKKLSFLSSGLHQLITELKEVIKNKNYTGNSPSENNKKVNEALKSYENFLPEAKVTTVVTPPQPDVTPSPLSVRVSGSSGSTKEETQIPTSGSLLTELQQVVQLQNYDEEDDSLVVLPIFGESEDNDEYLDQVVTGEAISVTMDNILSGFENEYDVIYLKPLAGVYRSLKKQIEKNIFTFNLNLNDILNSRLKKRKYFLDVLESDLMQFKHISSNEYIIEDSFKLLNSEQKNTLLKSYKYIKESVENDIKFAQEGISYYEKVLAKYKDDLESIKKVIKEEKEKFPSSPPTTPPSPAKTDEQKKESKFLPFLTNIETLYNNLVNKIDDYLINLKAKINDCNVEKDEAHVKITKLSDLKAIDDKIDLFKNHNDFDAIKKLINDDTKKDMLGKLLSTGLVQNFPNTIISKLIEGKFQDMLNISQHQCVKKQCPENSGCFRHLDEREECKCLLNYKQEGDKCVENPNPTCNENNGGCDADAKCTEEDSGSNGKKITCECTKPDSYPLFDGIFCSSSNFLGISFLLILMLILYSFI</sequence>
<organism>
    <name type="scientific">Plasmodium falciparum (isolate Palo Alto / Uganda)</name>
    <dbReference type="NCBI Taxonomy" id="57270"/>
    <lineage>
        <taxon>Eukaryota</taxon>
        <taxon>Sar</taxon>
        <taxon>Alveolata</taxon>
        <taxon>Apicomplexa</taxon>
        <taxon>Aconoidasida</taxon>
        <taxon>Haemosporida</taxon>
        <taxon>Plasmodiidae</taxon>
        <taxon>Plasmodium</taxon>
        <taxon>Plasmodium (Laverania)</taxon>
    </lineage>
</organism>
<comment type="function">
    <text evidence="2">During the asexual blood stage, involved in merozoite egress from host erythrocytes possibly via its interaction with the host cytoskeleton protein spectrin resulting in the destabilization of the host cytoskeleton and thus leading to erythrocyte cell membrane rupture. Involved in the binding to host erythrocytes and is required for host erythrocyte invasion.</text>
</comment>
<comment type="function">
    <molecule>p33 subunit</molecule>
    <text evidence="2">By binding to host proinflammatory cytokine S100P may interfere with host immune responses.</text>
</comment>
<comment type="function">
    <molecule>p19 subunit</molecule>
    <text evidence="2">Involved in merozoite invasion of host erythrocytes. May play a role in the biogenesis and/or function of the food vacuole during the intraerythrocytic development.</text>
</comment>
<comment type="subunit">
    <text evidence="2">Forms a complex composed of subunits p83, p30, p38, and p42 which remain non-covalently associated; the complex is formed at the merozoite surface prior to egress from host erythrocytes. Forms a complex composed of processed MSP1 subunits, MSP6 subunit p36 and MSP7; the complex is formed at the merozoite surface prior to egress from host erythrocytes. Within the complex, interacts (via subunit p38) with MSP6 subunit p36 and (via subunits p83, p30 and p38) with MSP7 (via subunit p22). Forms a complex composed of MSP1, MSP6, DBLMSP1 and DBLMSP2. Within the complex, interacts (via subunit p38) with DBLMSP1 and DBLMSP2. Forms a complex composed of MSP1, and rhoptry proteins RhopH3, RAP1 and CLAG9/RhopH3. Within the complex, interacts (via subunits p42 and p19) with RhopH3 (via C-terminus). Forms a complex composed of MSP1, MSP6, MSP7, MSP9 and MSP3; within the complex, MSP6 and MSP9 mediate the binding to the host erythrocyte. Interacts (via subunits p19 and p42) with MSP9; the interaction is direct; MSP1 subunits p19 or p42, and MSP9 form a co-ligand complex that interacts with host SLC4A1/Band 3 protein. May interact with PFD6. Interacts with host spectrin.</text>
</comment>
<comment type="subunit">
    <molecule>p83 subunit</molecule>
    <text evidence="2">Interacts with host glycophorin GYPA in a sialic acid-independent manner.</text>
</comment>
<comment type="subunit">
    <molecule>p33 subunit</molecule>
    <text evidence="2">Interacts with host proinflammatory cytokine S100P; the interaction blocks S100P inflammatory and chemotactic activities.</text>
</comment>
<comment type="subunit">
    <molecule>p42 subunit</molecule>
    <text evidence="2">Interacts with host SLC4A1/Band 3 (via 5ABC region) on the host erythrocyte surface in a sialic acid-independent manner.</text>
</comment>
<comment type="subcellular location">
    <subcellularLocation>
        <location evidence="2">Cell membrane</location>
        <topology evidence="3">Lipid-anchor</topology>
        <topology evidence="3">GPI-anchor</topology>
    </subcellularLocation>
    <subcellularLocation>
        <location evidence="2">Secreted</location>
    </subcellularLocation>
</comment>
<comment type="subcellular location">
    <molecule>p19 subunit</molecule>
    <subcellularLocation>
        <location evidence="2">Cell membrane</location>
        <topology evidence="3">Lipid-anchor</topology>
        <topology evidence="3">GPI-anchor</topology>
    </subcellularLocation>
    <subcellularLocation>
        <location evidence="2">Vacuole membrane</location>
        <topology evidence="3">Lipid-anchor</topology>
        <topology evidence="3">GPI-anchor</topology>
    </subcellularLocation>
    <text evidence="2">In free merozoites, localizes to the cell membrane (By similarity). Following merozoite invasion of host erythrocytes, p19 subunit is endocytosed into small food vacuoles in the ring stage and persists throughout the subsequent intra-erythrocytic stages at the surface of the food vacuole where it forms clusters (By similarity).</text>
</comment>
<comment type="PTM">
    <text evidence="2">The p190 precursor is cleaved by SUB1 prior to merozoite egress into 4 subunits p83, p30, p38, and p42 which remain non-covalently associated. SUB1-mediated proteolytic cleavage occurs in an orderly manner; the first cleavage occurs at the p30/p38 site, followed by cleavage at the p83/p30 site, the last cleavage occurs at the p38/p42 site. The order of cleavage is essential for parasite viability. SUB1-mediated processing is essential for merozoite egress. In a second processing step during erythrocyte invasion, p42 is cleaved by SUB2 into p33 and p19; the latter remains attached to the merozoite surface via its GPI-anchor and is endocytosed during the subsequent ring stage.</text>
</comment>
<comment type="polymorphism">
    <text evidence="5">The sequence varies across Plasmodium strains (PubMed:3049134). There are two major dimorphic forms of MSP1, typified by those expressed by the 3D7 and Wellcome P.falciparum isolates (PubMed:3049134).</text>
</comment>
<accession>P50495</accession>
<name>MSP1_PLAFP</name>